<feature type="chain" id="PRO_0000046343" description="Probable cation-transporting ATPase F">
    <location>
        <begin position="1"/>
        <end position="905"/>
    </location>
</feature>
<feature type="transmembrane region" description="Helical" evidence="2">
    <location>
        <begin position="64"/>
        <end position="82"/>
    </location>
</feature>
<feature type="transmembrane region" description="Helical" evidence="2">
    <location>
        <begin position="88"/>
        <end position="104"/>
    </location>
</feature>
<feature type="transmembrane region" description="Helical" evidence="2">
    <location>
        <begin position="248"/>
        <end position="268"/>
    </location>
</feature>
<feature type="transmembrane region" description="Helical" evidence="2">
    <location>
        <begin position="281"/>
        <end position="301"/>
    </location>
</feature>
<feature type="transmembrane region" description="Helical" evidence="2">
    <location>
        <begin position="716"/>
        <end position="736"/>
    </location>
</feature>
<feature type="transmembrane region" description="Helical" evidence="2">
    <location>
        <begin position="738"/>
        <end position="758"/>
    </location>
</feature>
<feature type="transmembrane region" description="Helical" evidence="2">
    <location>
        <begin position="778"/>
        <end position="798"/>
    </location>
</feature>
<feature type="transmembrane region" description="Helical" evidence="2">
    <location>
        <begin position="808"/>
        <end position="828"/>
    </location>
</feature>
<feature type="transmembrane region" description="Helical" evidence="2">
    <location>
        <begin position="842"/>
        <end position="862"/>
    </location>
</feature>
<feature type="transmembrane region" description="Helical" evidence="2">
    <location>
        <begin position="872"/>
        <end position="892"/>
    </location>
</feature>
<feature type="active site" description="4-aspartylphosphate intermediate" evidence="1">
    <location>
        <position position="333"/>
    </location>
</feature>
<feature type="binding site" evidence="1">
    <location>
        <position position="643"/>
    </location>
    <ligand>
        <name>Mg(2+)</name>
        <dbReference type="ChEBI" id="CHEBI:18420"/>
    </ligand>
</feature>
<feature type="binding site" evidence="1">
    <location>
        <position position="647"/>
    </location>
    <ligand>
        <name>Mg(2+)</name>
        <dbReference type="ChEBI" id="CHEBI:18420"/>
    </ligand>
</feature>
<accession>P9WPS9</accession>
<accession>L0TB76</accession>
<accession>P63687</accession>
<accession>Q10860</accession>
<accession>Q10861</accession>
<dbReference type="EC" id="7.2.2.-"/>
<dbReference type="EMBL" id="AL123456">
    <property type="protein sequence ID" value="CCP44769.1"/>
    <property type="molecule type" value="Genomic_DNA"/>
</dbReference>
<dbReference type="PIR" id="C70758">
    <property type="entry name" value="C70758"/>
</dbReference>
<dbReference type="RefSeq" id="NP_216513.1">
    <property type="nucleotide sequence ID" value="NC_000962.3"/>
</dbReference>
<dbReference type="RefSeq" id="WP_003410027.1">
    <property type="nucleotide sequence ID" value="NZ_NVQJ01000043.1"/>
</dbReference>
<dbReference type="SMR" id="P9WPS9"/>
<dbReference type="FunCoup" id="P9WPS9">
    <property type="interactions" value="352"/>
</dbReference>
<dbReference type="STRING" id="83332.Rv1997"/>
<dbReference type="PaxDb" id="83332-Rv1997"/>
<dbReference type="GeneID" id="888867"/>
<dbReference type="KEGG" id="mtu:Rv1997"/>
<dbReference type="KEGG" id="mtv:RVBD_1997"/>
<dbReference type="TubercuList" id="Rv1997"/>
<dbReference type="eggNOG" id="COG0474">
    <property type="taxonomic scope" value="Bacteria"/>
</dbReference>
<dbReference type="InParanoid" id="P9WPS9"/>
<dbReference type="OrthoDB" id="9814270at2"/>
<dbReference type="PhylomeDB" id="P9WPS9"/>
<dbReference type="Proteomes" id="UP000001584">
    <property type="component" value="Chromosome"/>
</dbReference>
<dbReference type="GO" id="GO:0043231">
    <property type="term" value="C:intracellular membrane-bounded organelle"/>
    <property type="evidence" value="ECO:0000318"/>
    <property type="project" value="GO_Central"/>
</dbReference>
<dbReference type="GO" id="GO:0009274">
    <property type="term" value="C:peptidoglycan-based cell wall"/>
    <property type="evidence" value="ECO:0007005"/>
    <property type="project" value="MTBBASE"/>
</dbReference>
<dbReference type="GO" id="GO:0005886">
    <property type="term" value="C:plasma membrane"/>
    <property type="evidence" value="ECO:0007005"/>
    <property type="project" value="MTBBASE"/>
</dbReference>
<dbReference type="GO" id="GO:0005524">
    <property type="term" value="F:ATP binding"/>
    <property type="evidence" value="ECO:0007669"/>
    <property type="project" value="UniProtKB-KW"/>
</dbReference>
<dbReference type="GO" id="GO:0016887">
    <property type="term" value="F:ATP hydrolysis activity"/>
    <property type="evidence" value="ECO:0007669"/>
    <property type="project" value="InterPro"/>
</dbReference>
<dbReference type="GO" id="GO:0046872">
    <property type="term" value="F:metal ion binding"/>
    <property type="evidence" value="ECO:0007669"/>
    <property type="project" value="UniProtKB-KW"/>
</dbReference>
<dbReference type="GO" id="GO:0005388">
    <property type="term" value="F:P-type calcium transporter activity"/>
    <property type="evidence" value="ECO:0000318"/>
    <property type="project" value="GO_Central"/>
</dbReference>
<dbReference type="CDD" id="cd02080">
    <property type="entry name" value="P-type_ATPase_cation"/>
    <property type="match status" value="1"/>
</dbReference>
<dbReference type="FunFam" id="2.70.150.10:FF:000016">
    <property type="entry name" value="Calcium-transporting P-type ATPase putative"/>
    <property type="match status" value="1"/>
</dbReference>
<dbReference type="FunFam" id="3.40.50.1000:FF:000028">
    <property type="entry name" value="Calcium-transporting P-type ATPase, putative"/>
    <property type="match status" value="1"/>
</dbReference>
<dbReference type="Gene3D" id="3.40.1110.10">
    <property type="entry name" value="Calcium-transporting ATPase, cytoplasmic domain N"/>
    <property type="match status" value="1"/>
</dbReference>
<dbReference type="Gene3D" id="2.70.150.10">
    <property type="entry name" value="Calcium-transporting ATPase, cytoplasmic transduction domain A"/>
    <property type="match status" value="1"/>
</dbReference>
<dbReference type="Gene3D" id="1.20.1110.10">
    <property type="entry name" value="Calcium-transporting ATPase, transmembrane domain"/>
    <property type="match status" value="1"/>
</dbReference>
<dbReference type="Gene3D" id="3.40.50.1000">
    <property type="entry name" value="HAD superfamily/HAD-like"/>
    <property type="match status" value="1"/>
</dbReference>
<dbReference type="InterPro" id="IPR006068">
    <property type="entry name" value="ATPase_P-typ_cation-transptr_C"/>
</dbReference>
<dbReference type="InterPro" id="IPR004014">
    <property type="entry name" value="ATPase_P-typ_cation-transptr_N"/>
</dbReference>
<dbReference type="InterPro" id="IPR023299">
    <property type="entry name" value="ATPase_P-typ_cyto_dom_N"/>
</dbReference>
<dbReference type="InterPro" id="IPR018303">
    <property type="entry name" value="ATPase_P-typ_P_site"/>
</dbReference>
<dbReference type="InterPro" id="IPR023298">
    <property type="entry name" value="ATPase_P-typ_TM_dom_sf"/>
</dbReference>
<dbReference type="InterPro" id="IPR008250">
    <property type="entry name" value="ATPase_P-typ_transduc_dom_A_sf"/>
</dbReference>
<dbReference type="InterPro" id="IPR050510">
    <property type="entry name" value="Cation_transp_ATPase_P-type"/>
</dbReference>
<dbReference type="InterPro" id="IPR036412">
    <property type="entry name" value="HAD-like_sf"/>
</dbReference>
<dbReference type="InterPro" id="IPR023214">
    <property type="entry name" value="HAD_sf"/>
</dbReference>
<dbReference type="InterPro" id="IPR001757">
    <property type="entry name" value="P_typ_ATPase"/>
</dbReference>
<dbReference type="InterPro" id="IPR044492">
    <property type="entry name" value="P_typ_ATPase_HD_dom"/>
</dbReference>
<dbReference type="NCBIfam" id="TIGR01494">
    <property type="entry name" value="ATPase_P-type"/>
    <property type="match status" value="3"/>
</dbReference>
<dbReference type="PANTHER" id="PTHR43294:SF21">
    <property type="entry name" value="CATION TRANSPORTING ATPASE"/>
    <property type="match status" value="1"/>
</dbReference>
<dbReference type="PANTHER" id="PTHR43294">
    <property type="entry name" value="SODIUM/POTASSIUM-TRANSPORTING ATPASE SUBUNIT ALPHA"/>
    <property type="match status" value="1"/>
</dbReference>
<dbReference type="Pfam" id="PF13246">
    <property type="entry name" value="Cation_ATPase"/>
    <property type="match status" value="1"/>
</dbReference>
<dbReference type="Pfam" id="PF00689">
    <property type="entry name" value="Cation_ATPase_C"/>
    <property type="match status" value="1"/>
</dbReference>
<dbReference type="Pfam" id="PF00690">
    <property type="entry name" value="Cation_ATPase_N"/>
    <property type="match status" value="1"/>
</dbReference>
<dbReference type="Pfam" id="PF00122">
    <property type="entry name" value="E1-E2_ATPase"/>
    <property type="match status" value="1"/>
</dbReference>
<dbReference type="Pfam" id="PF08282">
    <property type="entry name" value="Hydrolase_3"/>
    <property type="match status" value="1"/>
</dbReference>
<dbReference type="PRINTS" id="PR00119">
    <property type="entry name" value="CATATPASE"/>
</dbReference>
<dbReference type="PRINTS" id="PR00120">
    <property type="entry name" value="HATPASE"/>
</dbReference>
<dbReference type="SFLD" id="SFLDG00002">
    <property type="entry name" value="C1.7:_P-type_atpase_like"/>
    <property type="match status" value="1"/>
</dbReference>
<dbReference type="SFLD" id="SFLDF00027">
    <property type="entry name" value="p-type_atpase"/>
    <property type="match status" value="1"/>
</dbReference>
<dbReference type="SMART" id="SM00831">
    <property type="entry name" value="Cation_ATPase_N"/>
    <property type="match status" value="1"/>
</dbReference>
<dbReference type="SUPFAM" id="SSF81653">
    <property type="entry name" value="Calcium ATPase, transduction domain A"/>
    <property type="match status" value="1"/>
</dbReference>
<dbReference type="SUPFAM" id="SSF81665">
    <property type="entry name" value="Calcium ATPase, transmembrane domain M"/>
    <property type="match status" value="1"/>
</dbReference>
<dbReference type="SUPFAM" id="SSF56784">
    <property type="entry name" value="HAD-like"/>
    <property type="match status" value="1"/>
</dbReference>
<dbReference type="SUPFAM" id="SSF81660">
    <property type="entry name" value="Metal cation-transporting ATPase, ATP-binding domain N"/>
    <property type="match status" value="1"/>
</dbReference>
<dbReference type="PROSITE" id="PS00154">
    <property type="entry name" value="ATPASE_E1_E2"/>
    <property type="match status" value="1"/>
</dbReference>
<keyword id="KW-0067">ATP-binding</keyword>
<keyword id="KW-1003">Cell membrane</keyword>
<keyword id="KW-0460">Magnesium</keyword>
<keyword id="KW-0472">Membrane</keyword>
<keyword id="KW-0479">Metal-binding</keyword>
<keyword id="KW-0547">Nucleotide-binding</keyword>
<keyword id="KW-1185">Reference proteome</keyword>
<keyword id="KW-1278">Translocase</keyword>
<keyword id="KW-0812">Transmembrane</keyword>
<keyword id="KW-1133">Transmembrane helix</keyword>
<protein>
    <recommendedName>
        <fullName>Probable cation-transporting ATPase F</fullName>
        <ecNumber>7.2.2.-</ecNumber>
    </recommendedName>
</protein>
<comment type="catalytic activity">
    <reaction>
        <text>ATP + H2O = ADP + phosphate + H(+)</text>
        <dbReference type="Rhea" id="RHEA:13065"/>
        <dbReference type="ChEBI" id="CHEBI:15377"/>
        <dbReference type="ChEBI" id="CHEBI:15378"/>
        <dbReference type="ChEBI" id="CHEBI:30616"/>
        <dbReference type="ChEBI" id="CHEBI:43474"/>
        <dbReference type="ChEBI" id="CHEBI:456216"/>
    </reaction>
</comment>
<comment type="subcellular location">
    <subcellularLocation>
        <location>Cell membrane</location>
        <topology>Multi-pass membrane protein</topology>
    </subcellularLocation>
</comment>
<comment type="induction">
    <text evidence="3 4 5 6">A member of the dormancy regulon. Induced in response to reduced oxygen tension (hypoxia), low levels of nitric oxide (NO) and carbon monoxide (CO). It is hoped that this regulon will give insight into the latent, or dormant phase of infection.</text>
</comment>
<comment type="biotechnology">
    <text evidence="7">This protein serves as an immunogenic antigen, inducing gamma-interferon responses in whole-blood cultures from M.tuberculosis-exposed adults in Uganda and South Africa, indicating this might be a good vaccine candidate.</text>
</comment>
<comment type="similarity">
    <text evidence="8">Belongs to the cation transport ATPase (P-type) (TC 3.A.3) family. Type IIA subfamily.</text>
</comment>
<organism>
    <name type="scientific">Mycobacterium tuberculosis (strain ATCC 25618 / H37Rv)</name>
    <dbReference type="NCBI Taxonomy" id="83332"/>
    <lineage>
        <taxon>Bacteria</taxon>
        <taxon>Bacillati</taxon>
        <taxon>Actinomycetota</taxon>
        <taxon>Actinomycetes</taxon>
        <taxon>Mycobacteriales</taxon>
        <taxon>Mycobacteriaceae</taxon>
        <taxon>Mycobacterium</taxon>
        <taxon>Mycobacterium tuberculosis complex</taxon>
    </lineage>
</organism>
<proteinExistence type="evidence at protein level"/>
<gene>
    <name type="primary">ctpF</name>
    <name type="ordered locus">Rv1997</name>
    <name type="ORF">MTCY39.21c</name>
    <name type="ORF">MTCY39.22c</name>
</gene>
<name>CTPF_MYCTU</name>
<evidence type="ECO:0000250" key="1"/>
<evidence type="ECO:0000255" key="2"/>
<evidence type="ECO:0000269" key="3">
    <source>
    </source>
</evidence>
<evidence type="ECO:0000269" key="4">
    <source>
    </source>
</evidence>
<evidence type="ECO:0000269" key="5">
    <source>
    </source>
</evidence>
<evidence type="ECO:0000269" key="6">
    <source>
    </source>
</evidence>
<evidence type="ECO:0000269" key="7">
    <source>
    </source>
</evidence>
<evidence type="ECO:0000305" key="8"/>
<reference key="1">
    <citation type="journal article" date="1998" name="Nature">
        <title>Deciphering the biology of Mycobacterium tuberculosis from the complete genome sequence.</title>
        <authorList>
            <person name="Cole S.T."/>
            <person name="Brosch R."/>
            <person name="Parkhill J."/>
            <person name="Garnier T."/>
            <person name="Churcher C.M."/>
            <person name="Harris D.E."/>
            <person name="Gordon S.V."/>
            <person name="Eiglmeier K."/>
            <person name="Gas S."/>
            <person name="Barry C.E. III"/>
            <person name="Tekaia F."/>
            <person name="Badcock K."/>
            <person name="Basham D."/>
            <person name="Brown D."/>
            <person name="Chillingworth T."/>
            <person name="Connor R."/>
            <person name="Davies R.M."/>
            <person name="Devlin K."/>
            <person name="Feltwell T."/>
            <person name="Gentles S."/>
            <person name="Hamlin N."/>
            <person name="Holroyd S."/>
            <person name="Hornsby T."/>
            <person name="Jagels K."/>
            <person name="Krogh A."/>
            <person name="McLean J."/>
            <person name="Moule S."/>
            <person name="Murphy L.D."/>
            <person name="Oliver S."/>
            <person name="Osborne J."/>
            <person name="Quail M.A."/>
            <person name="Rajandream M.A."/>
            <person name="Rogers J."/>
            <person name="Rutter S."/>
            <person name="Seeger K."/>
            <person name="Skelton S."/>
            <person name="Squares S."/>
            <person name="Squares R."/>
            <person name="Sulston J.E."/>
            <person name="Taylor K."/>
            <person name="Whitehead S."/>
            <person name="Barrell B.G."/>
        </authorList>
    </citation>
    <scope>NUCLEOTIDE SEQUENCE [LARGE SCALE GENOMIC DNA]</scope>
    <source>
        <strain>ATCC 25618 / H37Rv</strain>
    </source>
</reference>
<reference key="2">
    <citation type="journal article" date="2001" name="Proc. Natl. Acad. Sci. U.S.A.">
        <title>Regulation of the Mycobacterium tuberculosis hypoxic response gene encoding alpha -crystallin.</title>
        <authorList>
            <person name="Sherman D.R."/>
            <person name="Voskuil M."/>
            <person name="Schnappinger D."/>
            <person name="Liao R."/>
            <person name="Harrell M.I."/>
            <person name="Schoolnik G.K."/>
        </authorList>
    </citation>
    <scope>INDUCTION BY HYPOXIA</scope>
    <source>
        <strain>ATCC 25618 / H37Rv</strain>
    </source>
</reference>
<reference key="3">
    <citation type="journal article" date="2003" name="J. Exp. Med.">
        <title>Inhibition of respiration by nitric oxide induces a Mycobacterium tuberculosis dormancy program.</title>
        <authorList>
            <person name="Voskuil M.I."/>
            <person name="Schnappinger D."/>
            <person name="Visconti K.C."/>
            <person name="Harrell M.I."/>
            <person name="Dolganov G.M."/>
            <person name="Sherman D.R."/>
            <person name="Schoolnik G.K."/>
        </authorList>
    </citation>
    <scope>INDUCTION BY NITRIC OXIDE (NO) AND BY HYPOXIA</scope>
    <scope>DORMANCY REGULON</scope>
    <source>
        <strain>ATCC 25618 / H37Rv</strain>
    </source>
</reference>
<reference key="4">
    <citation type="journal article" date="2008" name="Cell Host Microbe">
        <title>Mycobacterium tuberculosis senses host-derived carbon monoxide during macrophage infection.</title>
        <authorList>
            <person name="Shiloh M.U."/>
            <person name="Manzanillo P."/>
            <person name="Cox J.S."/>
        </authorList>
    </citation>
    <scope>INDUCTION BY CARBON MONOXIDE (CO)</scope>
    <source>
        <strain>ATCC 35801 / TMC 107 / Erdman</strain>
    </source>
</reference>
<reference key="5">
    <citation type="journal article" date="2008" name="J. Biol. Chem.">
        <title>Heme oxygenase-1-derived carbon monoxide induces the Mycobacterium tuberculosis dormancy regulon.</title>
        <authorList>
            <person name="Kumar A."/>
            <person name="Deshane J.S."/>
            <person name="Crossman D.K."/>
            <person name="Bolisetty S."/>
            <person name="Yan B.S."/>
            <person name="Kramnik I."/>
            <person name="Agarwal A."/>
            <person name="Steyn A.J."/>
        </authorList>
    </citation>
    <scope>INDUCTION BY CARBON MONOXIDE (CO)</scope>
    <scope>DORMANCY REGULON</scope>
    <source>
        <strain>ATCC 25618 / H37Rv</strain>
    </source>
</reference>
<reference key="6">
    <citation type="journal article" date="2009" name="Clin. Vaccine Immunol.">
        <title>Immunogenicity of novel DosR regulon-encoded candidate antigens of Mycobacterium tuberculosis in three high-burden populations in Africa.</title>
        <authorList>
            <person name="Black G.F."/>
            <person name="Thiel B.A."/>
            <person name="Ota M.O."/>
            <person name="Parida S.K."/>
            <person name="Adegbola R."/>
            <person name="Boom W.H."/>
            <person name="Dockrell H.M."/>
            <person name="Franken K.L."/>
            <person name="Friggen A.H."/>
            <person name="Hill P.C."/>
            <person name="Klein M.R."/>
            <person name="Lalor M.K."/>
            <person name="Mayanja H."/>
            <person name="Schoolnik G."/>
            <person name="Stanley K."/>
            <person name="Weldingh K."/>
            <person name="Kaufmann S.H."/>
            <person name="Walzl G."/>
            <person name="Ottenhoff T.H."/>
        </authorList>
    </citation>
    <scope>BIOTECHNOLOGY</scope>
</reference>
<reference key="7">
    <citation type="journal article" date="2011" name="Mol. Cell. Proteomics">
        <title>Proteogenomic analysis of Mycobacterium tuberculosis by high resolution mass spectrometry.</title>
        <authorList>
            <person name="Kelkar D.S."/>
            <person name="Kumar D."/>
            <person name="Kumar P."/>
            <person name="Balakrishnan L."/>
            <person name="Muthusamy B."/>
            <person name="Yadav A.K."/>
            <person name="Shrivastava P."/>
            <person name="Marimuthu A."/>
            <person name="Anand S."/>
            <person name="Sundaram H."/>
            <person name="Kingsbury R."/>
            <person name="Harsha H.C."/>
            <person name="Nair B."/>
            <person name="Prasad T.S."/>
            <person name="Chauhan D.S."/>
            <person name="Katoch K."/>
            <person name="Katoch V.M."/>
            <person name="Kumar P."/>
            <person name="Chaerkady R."/>
            <person name="Ramachandran S."/>
            <person name="Dash D."/>
            <person name="Pandey A."/>
        </authorList>
    </citation>
    <scope>IDENTIFICATION BY MASS SPECTROMETRY [LARGE SCALE ANALYSIS]</scope>
    <source>
        <strain>ATCC 25618 / H37Rv</strain>
    </source>
</reference>
<sequence length="905" mass="95033">MSASVSATTAHHGLPAHEVVLLLESDPYHGLSDGEAAQRLERFGPNTLAVVTRASLLARILRQFHHPLIYVLLVAGTITAGLKEFVDAAVIFGVVVINAIVGFIQESKAEAALQGLRSMVHTHAKVVREGHEHTMPSEELVPGDLVLLAAGDKVPADLRLVRQTGLSVNESALTGESTPVHKDEVALPEGTPVADRRNIAYSGTLVTAGHGAGIVVATGAETELGEIHRLVGAAEVVATPLTAKLAWFSKFLTIAILGLAALTFGVGLLRRQDAVETFTAAIALAVGAIPEGLPTAVTITLAIGMARMAKRRAVIRRLPAVETLGSTTVICADKTGTLTENQMTVQSIWTPHGEIRATGTGYAPDVLLCDTDDAPVPVNANAALRWSLLAGACSNDAALVRDGTRWQIVGDPTEGAMLVVAAKAGFNPERLATTLPQVAAIPFSSERQYMATLHRDGTDHVVLAKGAVERMLDLCGTEMGADGALRPLDRATVLRATEMLTSRGLRVLATGMGAGAGTPDDFDENVIPGSLALTGLQAMSDPPRAAAASAVAACHSAGIAVKMITGDHAGTATAIATEVGLLDNTEPAAGSVLTGAELAALSADQYPEAVDTASVFARVSPEQKLRLVQALQARGHVVAMTGDGVNDAPALRQANIGVAMGRGGTEVAKDAADMVLTDDDFATIEAAVEEGRGVFDNLTKFITWTLPTNLGEGLVILAAIAVGVALPILPTQILWINMTTAIALGLMLAFEPKEAGIMTRPPRDPDQPLLTGWLVRRTLLVSTLLVASAWWLFAWELDNGAGLHEARTAALNLFVVVEAFYLFSCRSLTRSAWRLGMFANRWIILGVSAQAIAQFAITYLPAMNMVFDTAPIDIGVWVRIFAVATAITIVVATDTLLPRIRAQPP</sequence>